<evidence type="ECO:0000255" key="1">
    <source>
        <dbReference type="HAMAP-Rule" id="MF_00592"/>
    </source>
</evidence>
<dbReference type="EC" id="4.1.2.4" evidence="1"/>
<dbReference type="EMBL" id="CP000247">
    <property type="protein sequence ID" value="ABG72647.1"/>
    <property type="molecule type" value="Genomic_DNA"/>
</dbReference>
<dbReference type="RefSeq" id="WP_001298497.1">
    <property type="nucleotide sequence ID" value="NC_008253.1"/>
</dbReference>
<dbReference type="SMR" id="Q0T8T2"/>
<dbReference type="GeneID" id="86862495"/>
<dbReference type="KEGG" id="ecp:ECP_4765"/>
<dbReference type="HOGENOM" id="CLU_053595_3_1_6"/>
<dbReference type="UniPathway" id="UPA00002">
    <property type="reaction ID" value="UER00468"/>
</dbReference>
<dbReference type="Proteomes" id="UP000009182">
    <property type="component" value="Chromosome"/>
</dbReference>
<dbReference type="GO" id="GO:0005737">
    <property type="term" value="C:cytoplasm"/>
    <property type="evidence" value="ECO:0007669"/>
    <property type="project" value="UniProtKB-SubCell"/>
</dbReference>
<dbReference type="GO" id="GO:0004139">
    <property type="term" value="F:deoxyribose-phosphate aldolase activity"/>
    <property type="evidence" value="ECO:0007669"/>
    <property type="project" value="UniProtKB-UniRule"/>
</dbReference>
<dbReference type="GO" id="GO:0006018">
    <property type="term" value="P:2-deoxyribose 1-phosphate catabolic process"/>
    <property type="evidence" value="ECO:0007669"/>
    <property type="project" value="UniProtKB-UniRule"/>
</dbReference>
<dbReference type="GO" id="GO:0016052">
    <property type="term" value="P:carbohydrate catabolic process"/>
    <property type="evidence" value="ECO:0007669"/>
    <property type="project" value="TreeGrafter"/>
</dbReference>
<dbReference type="GO" id="GO:0009264">
    <property type="term" value="P:deoxyribonucleotide catabolic process"/>
    <property type="evidence" value="ECO:0007669"/>
    <property type="project" value="InterPro"/>
</dbReference>
<dbReference type="CDD" id="cd00959">
    <property type="entry name" value="DeoC"/>
    <property type="match status" value="1"/>
</dbReference>
<dbReference type="FunFam" id="3.20.20.70:FF:000034">
    <property type="entry name" value="Deoxyribose-phosphate aldolase"/>
    <property type="match status" value="1"/>
</dbReference>
<dbReference type="Gene3D" id="3.20.20.70">
    <property type="entry name" value="Aldolase class I"/>
    <property type="match status" value="1"/>
</dbReference>
<dbReference type="HAMAP" id="MF_00592">
    <property type="entry name" value="DeoC_type2"/>
    <property type="match status" value="1"/>
</dbReference>
<dbReference type="InterPro" id="IPR013785">
    <property type="entry name" value="Aldolase_TIM"/>
</dbReference>
<dbReference type="InterPro" id="IPR011343">
    <property type="entry name" value="DeoC"/>
</dbReference>
<dbReference type="InterPro" id="IPR002915">
    <property type="entry name" value="DeoC/FbaB/LacD_aldolase"/>
</dbReference>
<dbReference type="InterPro" id="IPR023649">
    <property type="entry name" value="DeoC_typeII"/>
</dbReference>
<dbReference type="NCBIfam" id="TIGR00126">
    <property type="entry name" value="deoC"/>
    <property type="match status" value="1"/>
</dbReference>
<dbReference type="PANTHER" id="PTHR10889">
    <property type="entry name" value="DEOXYRIBOSE-PHOSPHATE ALDOLASE"/>
    <property type="match status" value="1"/>
</dbReference>
<dbReference type="PANTHER" id="PTHR10889:SF3">
    <property type="entry name" value="DEOXYRIBOSE-PHOSPHATE ALDOLASE"/>
    <property type="match status" value="1"/>
</dbReference>
<dbReference type="Pfam" id="PF01791">
    <property type="entry name" value="DeoC"/>
    <property type="match status" value="1"/>
</dbReference>
<dbReference type="PIRSF" id="PIRSF001357">
    <property type="entry name" value="DeoC"/>
    <property type="match status" value="1"/>
</dbReference>
<dbReference type="SMART" id="SM01133">
    <property type="entry name" value="DeoC"/>
    <property type="match status" value="1"/>
</dbReference>
<dbReference type="SUPFAM" id="SSF51569">
    <property type="entry name" value="Aldolase"/>
    <property type="match status" value="1"/>
</dbReference>
<name>DEOC_ECOL5</name>
<organism>
    <name type="scientific">Escherichia coli O6:K15:H31 (strain 536 / UPEC)</name>
    <dbReference type="NCBI Taxonomy" id="362663"/>
    <lineage>
        <taxon>Bacteria</taxon>
        <taxon>Pseudomonadati</taxon>
        <taxon>Pseudomonadota</taxon>
        <taxon>Gammaproteobacteria</taxon>
        <taxon>Enterobacterales</taxon>
        <taxon>Enterobacteriaceae</taxon>
        <taxon>Escherichia</taxon>
    </lineage>
</organism>
<keyword id="KW-0963">Cytoplasm</keyword>
<keyword id="KW-0456">Lyase</keyword>
<keyword id="KW-0704">Schiff base</keyword>
<gene>
    <name evidence="1" type="primary">deoC</name>
    <name type="ordered locus">ECP_4765</name>
</gene>
<proteinExistence type="inferred from homology"/>
<sequence>MTDLKASSLRALKLMDLTTLNDDDTDEKVIALCHQAKTPVGNTAAICIYPRFIPIARKTLKEQGTPEIRIATVTNFPHGNDDIDIALAETRAAIAYGADEVDVVFPYRALMAGNEQVGFDLVKACKEACAAANVLLKVIIETGELKDEALIRKASEISIKAGADFIKTSTGKVAVNATPESARIMMEVIRDMGVEKTVGFKPAGGVRTAEDAQKYLAIADELFGADWADARHYRFGASSLLASLLKALGHGDGKSASSY</sequence>
<protein>
    <recommendedName>
        <fullName evidence="1">Deoxyribose-phosphate aldolase</fullName>
        <shortName evidence="1">DERA</shortName>
        <ecNumber evidence="1">4.1.2.4</ecNumber>
    </recommendedName>
    <alternativeName>
        <fullName evidence="1">2-deoxy-D-ribose 5-phosphate aldolase</fullName>
    </alternativeName>
    <alternativeName>
        <fullName evidence="1">Phosphodeoxyriboaldolase</fullName>
        <shortName evidence="1">Deoxyriboaldolase</shortName>
    </alternativeName>
</protein>
<comment type="function">
    <text evidence="1">Catalyzes a reversible aldol reaction between acetaldehyde and D-glyceraldehyde 3-phosphate to generate 2-deoxy-D-ribose 5-phosphate.</text>
</comment>
<comment type="catalytic activity">
    <reaction evidence="1">
        <text>2-deoxy-D-ribose 5-phosphate = D-glyceraldehyde 3-phosphate + acetaldehyde</text>
        <dbReference type="Rhea" id="RHEA:12821"/>
        <dbReference type="ChEBI" id="CHEBI:15343"/>
        <dbReference type="ChEBI" id="CHEBI:59776"/>
        <dbReference type="ChEBI" id="CHEBI:62877"/>
        <dbReference type="EC" id="4.1.2.4"/>
    </reaction>
</comment>
<comment type="pathway">
    <text evidence="1">Carbohydrate degradation; 2-deoxy-D-ribose 1-phosphate degradation; D-glyceraldehyde 3-phosphate and acetaldehyde from 2-deoxy-alpha-D-ribose 1-phosphate: step 2/2.</text>
</comment>
<comment type="subcellular location">
    <subcellularLocation>
        <location evidence="1">Cytoplasm</location>
    </subcellularLocation>
</comment>
<comment type="similarity">
    <text evidence="1">Belongs to the DeoC/FbaB aldolase family. DeoC type 2 subfamily.</text>
</comment>
<feature type="chain" id="PRO_1000072597" description="Deoxyribose-phosphate aldolase">
    <location>
        <begin position="1"/>
        <end position="259"/>
    </location>
</feature>
<feature type="active site" description="Proton donor/acceptor" evidence="1">
    <location>
        <position position="102"/>
    </location>
</feature>
<feature type="active site" description="Schiff-base intermediate with acetaldehyde" evidence="1">
    <location>
        <position position="167"/>
    </location>
</feature>
<feature type="active site" description="Proton donor/acceptor" evidence="1">
    <location>
        <position position="201"/>
    </location>
</feature>
<accession>Q0T8T2</accession>
<reference key="1">
    <citation type="journal article" date="2006" name="Mol. Microbiol.">
        <title>Role of pathogenicity island-associated integrases in the genome plasticity of uropathogenic Escherichia coli strain 536.</title>
        <authorList>
            <person name="Hochhut B."/>
            <person name="Wilde C."/>
            <person name="Balling G."/>
            <person name="Middendorf B."/>
            <person name="Dobrindt U."/>
            <person name="Brzuszkiewicz E."/>
            <person name="Gottschalk G."/>
            <person name="Carniel E."/>
            <person name="Hacker J."/>
        </authorList>
    </citation>
    <scope>NUCLEOTIDE SEQUENCE [LARGE SCALE GENOMIC DNA]</scope>
    <source>
        <strain>536 / UPEC</strain>
    </source>
</reference>